<organism>
    <name type="scientific">Homo sapiens</name>
    <name type="common">Human</name>
    <dbReference type="NCBI Taxonomy" id="9606"/>
    <lineage>
        <taxon>Eukaryota</taxon>
        <taxon>Metazoa</taxon>
        <taxon>Chordata</taxon>
        <taxon>Craniata</taxon>
        <taxon>Vertebrata</taxon>
        <taxon>Euteleostomi</taxon>
        <taxon>Mammalia</taxon>
        <taxon>Eutheria</taxon>
        <taxon>Euarchontoglires</taxon>
        <taxon>Primates</taxon>
        <taxon>Haplorrhini</taxon>
        <taxon>Catarrhini</taxon>
        <taxon>Hominidae</taxon>
        <taxon>Homo</taxon>
    </lineage>
</organism>
<reference key="1">
    <citation type="journal article" date="1997" name="Cytogenet. Cell Genet.">
        <title>Molecular cloning of a novel gene similar to myeloid antigen CD33 and its specific expression in placenta.</title>
        <authorList>
            <person name="Takei Y."/>
            <person name="Sasaki S."/>
            <person name="Fujiwara T."/>
            <person name="Takahashi E."/>
            <person name="Muto T."/>
            <person name="Nakamura Y."/>
        </authorList>
    </citation>
    <scope>NUCLEOTIDE SEQUENCE [MRNA] (ISOFORMS 1 AND 2)</scope>
    <source>
        <tissue>Placenta</tissue>
    </source>
</reference>
<reference key="2">
    <citation type="journal article" date="2004" name="Nat. Genet.">
        <title>Complete sequencing and characterization of 21,243 full-length human cDNAs.</title>
        <authorList>
            <person name="Ota T."/>
            <person name="Suzuki Y."/>
            <person name="Nishikawa T."/>
            <person name="Otsuki T."/>
            <person name="Sugiyama T."/>
            <person name="Irie R."/>
            <person name="Wakamatsu A."/>
            <person name="Hayashi K."/>
            <person name="Sato H."/>
            <person name="Nagai K."/>
            <person name="Kimura K."/>
            <person name="Makita H."/>
            <person name="Sekine M."/>
            <person name="Obayashi M."/>
            <person name="Nishi T."/>
            <person name="Shibahara T."/>
            <person name="Tanaka T."/>
            <person name="Ishii S."/>
            <person name="Yamamoto J."/>
            <person name="Saito K."/>
            <person name="Kawai Y."/>
            <person name="Isono Y."/>
            <person name="Nakamura Y."/>
            <person name="Nagahari K."/>
            <person name="Murakami K."/>
            <person name="Yasuda T."/>
            <person name="Iwayanagi T."/>
            <person name="Wagatsuma M."/>
            <person name="Shiratori A."/>
            <person name="Sudo H."/>
            <person name="Hosoiri T."/>
            <person name="Kaku Y."/>
            <person name="Kodaira H."/>
            <person name="Kondo H."/>
            <person name="Sugawara M."/>
            <person name="Takahashi M."/>
            <person name="Kanda K."/>
            <person name="Yokoi T."/>
            <person name="Furuya T."/>
            <person name="Kikkawa E."/>
            <person name="Omura Y."/>
            <person name="Abe K."/>
            <person name="Kamihara K."/>
            <person name="Katsuta N."/>
            <person name="Sato K."/>
            <person name="Tanikawa M."/>
            <person name="Yamazaki M."/>
            <person name="Ninomiya K."/>
            <person name="Ishibashi T."/>
            <person name="Yamashita H."/>
            <person name="Murakawa K."/>
            <person name="Fujimori K."/>
            <person name="Tanai H."/>
            <person name="Kimata M."/>
            <person name="Watanabe M."/>
            <person name="Hiraoka S."/>
            <person name="Chiba Y."/>
            <person name="Ishida S."/>
            <person name="Ono Y."/>
            <person name="Takiguchi S."/>
            <person name="Watanabe S."/>
            <person name="Yosida M."/>
            <person name="Hotuta T."/>
            <person name="Kusano J."/>
            <person name="Kanehori K."/>
            <person name="Takahashi-Fujii A."/>
            <person name="Hara H."/>
            <person name="Tanase T.-O."/>
            <person name="Nomura Y."/>
            <person name="Togiya S."/>
            <person name="Komai F."/>
            <person name="Hara R."/>
            <person name="Takeuchi K."/>
            <person name="Arita M."/>
            <person name="Imose N."/>
            <person name="Musashino K."/>
            <person name="Yuuki H."/>
            <person name="Oshima A."/>
            <person name="Sasaki N."/>
            <person name="Aotsuka S."/>
            <person name="Yoshikawa Y."/>
            <person name="Matsunawa H."/>
            <person name="Ichihara T."/>
            <person name="Shiohata N."/>
            <person name="Sano S."/>
            <person name="Moriya S."/>
            <person name="Momiyama H."/>
            <person name="Satoh N."/>
            <person name="Takami S."/>
            <person name="Terashima Y."/>
            <person name="Suzuki O."/>
            <person name="Nakagawa S."/>
            <person name="Senoh A."/>
            <person name="Mizoguchi H."/>
            <person name="Goto Y."/>
            <person name="Shimizu F."/>
            <person name="Wakebe H."/>
            <person name="Hishigaki H."/>
            <person name="Watanabe T."/>
            <person name="Sugiyama A."/>
            <person name="Takemoto M."/>
            <person name="Kawakami B."/>
            <person name="Yamazaki M."/>
            <person name="Watanabe K."/>
            <person name="Kumagai A."/>
            <person name="Itakura S."/>
            <person name="Fukuzumi Y."/>
            <person name="Fujimori Y."/>
            <person name="Komiyama M."/>
            <person name="Tashiro H."/>
            <person name="Tanigami A."/>
            <person name="Fujiwara T."/>
            <person name="Ono T."/>
            <person name="Yamada K."/>
            <person name="Fujii Y."/>
            <person name="Ozaki K."/>
            <person name="Hirao M."/>
            <person name="Ohmori Y."/>
            <person name="Kawabata A."/>
            <person name="Hikiji T."/>
            <person name="Kobatake N."/>
            <person name="Inagaki H."/>
            <person name="Ikema Y."/>
            <person name="Okamoto S."/>
            <person name="Okitani R."/>
            <person name="Kawakami T."/>
            <person name="Noguchi S."/>
            <person name="Itoh T."/>
            <person name="Shigeta K."/>
            <person name="Senba T."/>
            <person name="Matsumura K."/>
            <person name="Nakajima Y."/>
            <person name="Mizuno T."/>
            <person name="Morinaga M."/>
            <person name="Sasaki M."/>
            <person name="Togashi T."/>
            <person name="Oyama M."/>
            <person name="Hata H."/>
            <person name="Watanabe M."/>
            <person name="Komatsu T."/>
            <person name="Mizushima-Sugano J."/>
            <person name="Satoh T."/>
            <person name="Shirai Y."/>
            <person name="Takahashi Y."/>
            <person name="Nakagawa K."/>
            <person name="Okumura K."/>
            <person name="Nagase T."/>
            <person name="Nomura N."/>
            <person name="Kikuchi H."/>
            <person name="Masuho Y."/>
            <person name="Yamashita R."/>
            <person name="Nakai K."/>
            <person name="Yada T."/>
            <person name="Nakamura Y."/>
            <person name="Ohara O."/>
            <person name="Isogai T."/>
            <person name="Sugano S."/>
        </authorList>
    </citation>
    <scope>NUCLEOTIDE SEQUENCE [LARGE SCALE MRNA] (ISOFORMS 5 AND 6)</scope>
    <scope>VARIANT VAL-57</scope>
    <source>
        <tissue>Placenta</tissue>
    </source>
</reference>
<reference key="3">
    <citation type="journal article" date="2004" name="Nature">
        <title>The DNA sequence and biology of human chromosome 19.</title>
        <authorList>
            <person name="Grimwood J."/>
            <person name="Gordon L.A."/>
            <person name="Olsen A.S."/>
            <person name="Terry A."/>
            <person name="Schmutz J."/>
            <person name="Lamerdin J.E."/>
            <person name="Hellsten U."/>
            <person name="Goodstein D."/>
            <person name="Couronne O."/>
            <person name="Tran-Gyamfi M."/>
            <person name="Aerts A."/>
            <person name="Altherr M."/>
            <person name="Ashworth L."/>
            <person name="Bajorek E."/>
            <person name="Black S."/>
            <person name="Branscomb E."/>
            <person name="Caenepeel S."/>
            <person name="Carrano A.V."/>
            <person name="Caoile C."/>
            <person name="Chan Y.M."/>
            <person name="Christensen M."/>
            <person name="Cleland C.A."/>
            <person name="Copeland A."/>
            <person name="Dalin E."/>
            <person name="Dehal P."/>
            <person name="Denys M."/>
            <person name="Detter J.C."/>
            <person name="Escobar J."/>
            <person name="Flowers D."/>
            <person name="Fotopulos D."/>
            <person name="Garcia C."/>
            <person name="Georgescu A.M."/>
            <person name="Glavina T."/>
            <person name="Gomez M."/>
            <person name="Gonzales E."/>
            <person name="Groza M."/>
            <person name="Hammon N."/>
            <person name="Hawkins T."/>
            <person name="Haydu L."/>
            <person name="Ho I."/>
            <person name="Huang W."/>
            <person name="Israni S."/>
            <person name="Jett J."/>
            <person name="Kadner K."/>
            <person name="Kimball H."/>
            <person name="Kobayashi A."/>
            <person name="Larionov V."/>
            <person name="Leem S.-H."/>
            <person name="Lopez F."/>
            <person name="Lou Y."/>
            <person name="Lowry S."/>
            <person name="Malfatti S."/>
            <person name="Martinez D."/>
            <person name="McCready P.M."/>
            <person name="Medina C."/>
            <person name="Morgan J."/>
            <person name="Nelson K."/>
            <person name="Nolan M."/>
            <person name="Ovcharenko I."/>
            <person name="Pitluck S."/>
            <person name="Pollard M."/>
            <person name="Popkie A.P."/>
            <person name="Predki P."/>
            <person name="Quan G."/>
            <person name="Ramirez L."/>
            <person name="Rash S."/>
            <person name="Retterer J."/>
            <person name="Rodriguez A."/>
            <person name="Rogers S."/>
            <person name="Salamov A."/>
            <person name="Salazar A."/>
            <person name="She X."/>
            <person name="Smith D."/>
            <person name="Slezak T."/>
            <person name="Solovyev V."/>
            <person name="Thayer N."/>
            <person name="Tice H."/>
            <person name="Tsai M."/>
            <person name="Ustaszewska A."/>
            <person name="Vo N."/>
            <person name="Wagner M."/>
            <person name="Wheeler J."/>
            <person name="Wu K."/>
            <person name="Xie G."/>
            <person name="Yang J."/>
            <person name="Dubchak I."/>
            <person name="Furey T.S."/>
            <person name="DeJong P."/>
            <person name="Dickson M."/>
            <person name="Gordon D."/>
            <person name="Eichler E.E."/>
            <person name="Pennacchio L.A."/>
            <person name="Richardson P."/>
            <person name="Stubbs L."/>
            <person name="Rokhsar D.S."/>
            <person name="Myers R.M."/>
            <person name="Rubin E.M."/>
            <person name="Lucas S.M."/>
        </authorList>
    </citation>
    <scope>NUCLEOTIDE SEQUENCE [LARGE SCALE GENOMIC DNA]</scope>
</reference>
<reference key="4">
    <citation type="journal article" date="2004" name="Genome Res.">
        <title>The status, quality, and expansion of the NIH full-length cDNA project: the Mammalian Gene Collection (MGC).</title>
        <authorList>
            <consortium name="The MGC Project Team"/>
        </authorList>
    </citation>
    <scope>NUCLEOTIDE SEQUENCE [LARGE SCALE MRNA] (ISOFORMS 3 AND 4)</scope>
</reference>
<reference key="5">
    <citation type="journal article" date="1999" name="J. Biol. Chem.">
        <title>OB-BP1/Siglec-6. A leptin- and sialic acid-binding protein of the immunoglobulin superfamily.</title>
        <authorList>
            <person name="Patel N."/>
            <person name="Brinkman-Van der Linden E.C.M."/>
            <person name="Altmann S.W."/>
            <person name="Gish K.C."/>
            <person name="Balasubramanian S."/>
            <person name="Timans J.C."/>
            <person name="Peterson D."/>
            <person name="Bell M.P."/>
            <person name="Bazan J.F."/>
            <person name="Varki A."/>
            <person name="Kastelein R.A."/>
        </authorList>
    </citation>
    <scope>NUCLEOTIDE SEQUENCE [MRNA] OF 3-453 (ISOFORM 1)</scope>
    <scope>INTERACTION WITH LEP</scope>
    <source>
        <tissue>Erythroleukemia</tissue>
    </source>
</reference>
<reference key="6">
    <citation type="journal article" date="1999" name="J. Biol. Chem.">
        <authorList>
            <person name="Patel N."/>
            <person name="Brinkman-Van der Linden E.C.M."/>
            <person name="Altmann S.W."/>
            <person name="Gish K.C."/>
            <person name="Balasubramanian S."/>
            <person name="Timans J.C."/>
            <person name="Peterson D."/>
            <person name="Bell M.P."/>
            <person name="Bazan J.F."/>
            <person name="Varki A."/>
            <person name="Kastelein R.A."/>
        </authorList>
    </citation>
    <scope>ERRATUM OF PUBMED:10428856</scope>
</reference>
<keyword id="KW-0025">Alternative splicing</keyword>
<keyword id="KW-0130">Cell adhesion</keyword>
<keyword id="KW-1003">Cell membrane</keyword>
<keyword id="KW-1015">Disulfide bond</keyword>
<keyword id="KW-0325">Glycoprotein</keyword>
<keyword id="KW-0393">Immunoglobulin domain</keyword>
<keyword id="KW-0430">Lectin</keyword>
<keyword id="KW-0472">Membrane</keyword>
<keyword id="KW-1267">Proteomics identification</keyword>
<keyword id="KW-1185">Reference proteome</keyword>
<keyword id="KW-0677">Repeat</keyword>
<keyword id="KW-0964">Secreted</keyword>
<keyword id="KW-0732">Signal</keyword>
<keyword id="KW-0812">Transmembrane</keyword>
<keyword id="KW-1133">Transmembrane helix</keyword>
<protein>
    <recommendedName>
        <fullName>Sialic acid-binding Ig-like lectin 6</fullName>
        <shortName>Siglec-6</shortName>
    </recommendedName>
    <alternativeName>
        <fullName>CD33 antigen-like 1</fullName>
    </alternativeName>
    <alternativeName>
        <fullName>CDw327</fullName>
    </alternativeName>
    <alternativeName>
        <fullName>Obesity-binding protein 1</fullName>
        <shortName>OB-BP1</shortName>
    </alternativeName>
    <cdAntigenName>CD327</cdAntigenName>
</protein>
<proteinExistence type="evidence at protein level"/>
<name>SIGL6_HUMAN</name>
<comment type="function">
    <text>Putative adhesion molecule that mediates sialic-acid dependent binding to cells. Binds to alpha-2,6-linked sialic acid. The sialic acid recognition site may be masked by cis interactions with sialic acids on the same cell surface.</text>
</comment>
<comment type="subunit">
    <text evidence="4">Interacts with LEP.</text>
</comment>
<comment type="interaction">
    <interactant intactId="EBI-2814604">
        <id>O43699</id>
    </interactant>
    <interactant intactId="EBI-701903">
        <id>Q14192</id>
        <label>FHL2</label>
    </interactant>
    <organismsDiffer>false</organismsDiffer>
    <experiments>3</experiments>
</comment>
<comment type="interaction">
    <interactant intactId="EBI-2814604">
        <id>O43699</id>
    </interactant>
    <interactant intactId="EBI-533224">
        <id>P15884</id>
        <label>TCF4</label>
    </interactant>
    <organismsDiffer>false</organismsDiffer>
    <experiments>3</experiments>
</comment>
<comment type="interaction">
    <interactant intactId="EBI-12161783">
        <id>O43699-3</id>
    </interactant>
    <interactant intactId="EBI-750078">
        <id>Q13021</id>
        <label>MALL</label>
    </interactant>
    <organismsDiffer>false</organismsDiffer>
    <experiments>3</experiments>
</comment>
<comment type="interaction">
    <interactant intactId="EBI-12161783">
        <id>O43699-3</id>
    </interactant>
    <interactant intactId="EBI-747278">
        <id>P26367</id>
        <label>PAX6</label>
    </interactant>
    <organismsDiffer>false</organismsDiffer>
    <experiments>3</experiments>
</comment>
<comment type="interaction">
    <interactant intactId="EBI-12161783">
        <id>O43699-3</id>
    </interactant>
    <interactant intactId="EBI-528701">
        <id>O00206</id>
        <label>TLR4</label>
    </interactant>
    <organismsDiffer>false</organismsDiffer>
    <experiments>2</experiments>
</comment>
<comment type="interaction">
    <interactant intactId="EBI-12161783">
        <id>O43699-3</id>
    </interactant>
    <interactant intactId="EBI-625509">
        <id>Q8N720</id>
        <label>ZNF655</label>
    </interactant>
    <organismsDiffer>false</organismsDiffer>
    <experiments>3</experiments>
</comment>
<comment type="subcellular location">
    <molecule>Isoform 1</molecule>
    <subcellularLocation>
        <location>Cell membrane</location>
        <topology>Single-pass type I membrane protein</topology>
    </subcellularLocation>
</comment>
<comment type="subcellular location">
    <molecule>Isoform 2</molecule>
    <subcellularLocation>
        <location>Secreted</location>
    </subcellularLocation>
</comment>
<comment type="alternative products">
    <event type="alternative splicing"/>
    <isoform>
        <id>O43699-1</id>
        <name>1</name>
        <name>Membrane-bound</name>
        <name>CD33L1</name>
        <sequence type="displayed"/>
    </isoform>
    <isoform>
        <id>O43699-2</id>
        <name>2</name>
        <name>Secreted</name>
        <name>CD33L2</name>
        <sequence type="described" ref="VSP_002553 VSP_002554"/>
    </isoform>
    <isoform>
        <id>O43699-3</id>
        <name>3</name>
        <sequence type="described" ref="VSP_035812"/>
    </isoform>
    <isoform>
        <id>O43699-4</id>
        <name>4</name>
        <sequence type="described" ref="VSP_035811 VSP_002553 VSP_002554"/>
    </isoform>
    <isoform>
        <id>O43699-5</id>
        <name>5</name>
        <sequence type="described" ref="VSP_045387 VSP_045388"/>
    </isoform>
    <isoform>
        <id>O43699-6</id>
        <name>6</name>
        <sequence type="described" ref="VSP_046070 VSP_035812"/>
    </isoform>
</comment>
<comment type="tissue specificity">
    <text>Expressed at high levels in placenta (cyto- and syncytiotrophoblastic cells) and at lower levels in spleen, peripheral blood leukocytes (predominantly B-cells) and small intestine.</text>
</comment>
<comment type="domain">
    <text>Contains 1 copy of a cytoplasmic motif that is referred to as the immunoreceptor tyrosine-based inhibitor motif (ITIM). This motif is involved in modulation of cellular responses. The phosphorylated ITIM motif can bind the SH2 domain of several SH2-containing phosphatases.</text>
</comment>
<comment type="miscellaneous">
    <molecule>Isoform 2</molecule>
    <text evidence="9">Should not be confused with SIGLEC5 which has been called CD33L2.</text>
</comment>
<comment type="similarity">
    <text evidence="9">Belongs to the immunoglobulin superfamily. SIGLEC (sialic acid binding Ig-like lectin) family.</text>
</comment>
<comment type="sequence caution" evidence="9">
    <conflict type="erroneous initiation">
        <sequence resource="EMBL-CDS" id="AAB70702"/>
    </conflict>
</comment>
<comment type="sequence caution" evidence="9">
    <conflict type="erroneous initiation">
        <sequence resource="EMBL-CDS" id="AAH35359"/>
    </conflict>
</comment>
<comment type="sequence caution" evidence="9">
    <conflict type="erroneous initiation">
        <sequence resource="EMBL-CDS" id="AAI40799"/>
    </conflict>
</comment>
<comment type="sequence caution" evidence="9">
    <conflict type="erroneous initiation">
        <sequence resource="EMBL-CDS" id="BAA24983"/>
    </conflict>
</comment>
<comment type="sequence caution" evidence="9">
    <conflict type="erroneous initiation">
        <sequence resource="EMBL-CDS" id="BAA24984"/>
    </conflict>
</comment>
<comment type="online information" name="Functional Glycomics Gateway - Glycan Binding">
    <link uri="http://www.functionalglycomics.org/glycomics/GBPServlet?&amp;operationType=view&amp;cbpId=cbp_hum_Itlect_273"/>
    <text>Siglec-6</text>
</comment>
<evidence type="ECO:0000250" key="1"/>
<evidence type="ECO:0000255" key="2"/>
<evidence type="ECO:0000255" key="3">
    <source>
        <dbReference type="PROSITE-ProRule" id="PRU00114"/>
    </source>
</evidence>
<evidence type="ECO:0000269" key="4">
    <source>
    </source>
</evidence>
<evidence type="ECO:0000269" key="5">
    <source>
    </source>
</evidence>
<evidence type="ECO:0000303" key="6">
    <source>
    </source>
</evidence>
<evidence type="ECO:0000303" key="7">
    <source>
    </source>
</evidence>
<evidence type="ECO:0000303" key="8">
    <source>
    </source>
</evidence>
<evidence type="ECO:0000305" key="9"/>
<accession>O43699</accession>
<accession>A8MV71</accession>
<accession>B2RTS8</accession>
<accession>C9JBE5</accession>
<accession>F8WA78</accession>
<accession>O15388</accession>
<accession>O43700</accession>
<dbReference type="EMBL" id="D86358">
    <property type="protein sequence ID" value="BAA24983.1"/>
    <property type="status" value="ALT_INIT"/>
    <property type="molecule type" value="mRNA"/>
</dbReference>
<dbReference type="EMBL" id="D86359">
    <property type="protein sequence ID" value="BAA24984.1"/>
    <property type="status" value="ALT_INIT"/>
    <property type="molecule type" value="mRNA"/>
</dbReference>
<dbReference type="EMBL" id="AK300170">
    <property type="status" value="NOT_ANNOTATED_CDS"/>
    <property type="molecule type" value="mRNA"/>
</dbReference>
<dbReference type="EMBL" id="AK300182">
    <property type="status" value="NOT_ANNOTATED_CDS"/>
    <property type="molecule type" value="mRNA"/>
</dbReference>
<dbReference type="EMBL" id="AC020914">
    <property type="status" value="NOT_ANNOTATED_CDS"/>
    <property type="molecule type" value="Genomic_DNA"/>
</dbReference>
<dbReference type="EMBL" id="BC035359">
    <property type="protein sequence ID" value="AAH35359.2"/>
    <property type="status" value="ALT_INIT"/>
    <property type="molecule type" value="mRNA"/>
</dbReference>
<dbReference type="EMBL" id="BC140798">
    <property type="protein sequence ID" value="AAI40799.1"/>
    <property type="status" value="ALT_INIT"/>
    <property type="molecule type" value="mRNA"/>
</dbReference>
<dbReference type="EMBL" id="U71382">
    <property type="protein sequence ID" value="AAB70702.1"/>
    <property type="status" value="ALT_INIT"/>
    <property type="molecule type" value="mRNA"/>
</dbReference>
<dbReference type="CCDS" id="CCDS12834.3">
    <molecule id="O43699-1"/>
</dbReference>
<dbReference type="CCDS" id="CCDS12835.3">
    <molecule id="O43699-3"/>
</dbReference>
<dbReference type="CCDS" id="CCDS12836.3">
    <molecule id="O43699-2"/>
</dbReference>
<dbReference type="CCDS" id="CCDS54307.1">
    <molecule id="O43699-6"/>
</dbReference>
<dbReference type="CCDS" id="CCDS54308.1">
    <molecule id="O43699-5"/>
</dbReference>
<dbReference type="CCDS" id="CCDS59417.1">
    <molecule id="O43699-4"/>
</dbReference>
<dbReference type="RefSeq" id="NP_001171018.1">
    <molecule id="O43699-6"/>
    <property type="nucleotide sequence ID" value="NM_001177547.3"/>
</dbReference>
<dbReference type="RefSeq" id="NP_001171019.1">
    <molecule id="O43699-5"/>
    <property type="nucleotide sequence ID" value="NM_001177548.3"/>
</dbReference>
<dbReference type="RefSeq" id="NP_001171020.1">
    <molecule id="O43699-4"/>
    <property type="nucleotide sequence ID" value="NM_001177549.3"/>
</dbReference>
<dbReference type="RefSeq" id="NP_001236.4">
    <molecule id="O43699-1"/>
    <property type="nucleotide sequence ID" value="NM_001245.6"/>
</dbReference>
<dbReference type="RefSeq" id="NP_942142.3">
    <molecule id="O43699-3"/>
    <property type="nucleotide sequence ID" value="NM_198845.6"/>
</dbReference>
<dbReference type="RefSeq" id="NP_942143.3">
    <molecule id="O43699-2"/>
    <property type="nucleotide sequence ID" value="NM_198846.6"/>
</dbReference>
<dbReference type="SMR" id="O43699"/>
<dbReference type="BioGRID" id="107384">
    <property type="interactions" value="7"/>
</dbReference>
<dbReference type="FunCoup" id="O43699">
    <property type="interactions" value="252"/>
</dbReference>
<dbReference type="IntAct" id="O43699">
    <property type="interactions" value="14"/>
</dbReference>
<dbReference type="STRING" id="9606.ENSP00000401502"/>
<dbReference type="GlyCosmos" id="O43699">
    <property type="glycosylation" value="4 sites, No reported glycans"/>
</dbReference>
<dbReference type="GlyGen" id="O43699">
    <property type="glycosylation" value="5 sites, 2 N-linked glycans (1 site)"/>
</dbReference>
<dbReference type="iPTMnet" id="O43699"/>
<dbReference type="PhosphoSitePlus" id="O43699"/>
<dbReference type="BioMuta" id="SIGLEC6"/>
<dbReference type="MassIVE" id="O43699"/>
<dbReference type="PaxDb" id="9606-ENSP00000401502"/>
<dbReference type="PeptideAtlas" id="O43699"/>
<dbReference type="ProteomicsDB" id="30448"/>
<dbReference type="ProteomicsDB" id="49120">
    <molecule id="O43699-1"/>
</dbReference>
<dbReference type="ProteomicsDB" id="49121">
    <molecule id="O43699-2"/>
</dbReference>
<dbReference type="ProteomicsDB" id="49122">
    <molecule id="O43699-3"/>
</dbReference>
<dbReference type="ProteomicsDB" id="49123">
    <molecule id="O43699-4"/>
</dbReference>
<dbReference type="ProteomicsDB" id="9453"/>
<dbReference type="Antibodypedia" id="2300">
    <property type="antibodies" value="374 antibodies from 33 providers"/>
</dbReference>
<dbReference type="DNASU" id="946"/>
<dbReference type="Ensembl" id="ENST00000343300.8">
    <molecule id="O43699-2"/>
    <property type="protein sequence ID" value="ENSP00000345907.4"/>
    <property type="gene ID" value="ENSG00000105492.16"/>
</dbReference>
<dbReference type="Ensembl" id="ENST00000346477.7">
    <molecule id="O43699-3"/>
    <property type="protein sequence ID" value="ENSP00000344064.4"/>
    <property type="gene ID" value="ENSG00000105492.16"/>
</dbReference>
<dbReference type="Ensembl" id="ENST00000359982.8">
    <molecule id="O43699-5"/>
    <property type="protein sequence ID" value="ENSP00000353071.4"/>
    <property type="gene ID" value="ENSG00000105492.16"/>
</dbReference>
<dbReference type="Ensembl" id="ENST00000391797.3">
    <molecule id="O43699-4"/>
    <property type="protein sequence ID" value="ENSP00000375674.3"/>
    <property type="gene ID" value="ENSG00000105492.16"/>
</dbReference>
<dbReference type="Ensembl" id="ENST00000425629.8">
    <molecule id="O43699-1"/>
    <property type="protein sequence ID" value="ENSP00000401502.2"/>
    <property type="gene ID" value="ENSG00000105492.16"/>
</dbReference>
<dbReference type="Ensembl" id="ENST00000436458.5">
    <molecule id="O43699-6"/>
    <property type="protein sequence ID" value="ENSP00000410679.1"/>
    <property type="gene ID" value="ENSG00000105492.16"/>
</dbReference>
<dbReference type="GeneID" id="946"/>
<dbReference type="KEGG" id="hsa:946"/>
<dbReference type="MANE-Select" id="ENST00000425629.8">
    <property type="protein sequence ID" value="ENSP00000401502.2"/>
    <property type="RefSeq nucleotide sequence ID" value="NM_001245.7"/>
    <property type="RefSeq protein sequence ID" value="NP_001236.4"/>
</dbReference>
<dbReference type="UCSC" id="uc002pwy.4">
    <molecule id="O43699-1"/>
    <property type="organism name" value="human"/>
</dbReference>
<dbReference type="AGR" id="HGNC:10875"/>
<dbReference type="CTD" id="946"/>
<dbReference type="DisGeNET" id="946"/>
<dbReference type="GeneCards" id="SIGLEC6"/>
<dbReference type="HGNC" id="HGNC:10875">
    <property type="gene designation" value="SIGLEC6"/>
</dbReference>
<dbReference type="HPA" id="ENSG00000105492">
    <property type="expression patterns" value="Tissue enriched (placenta)"/>
</dbReference>
<dbReference type="MIM" id="604405">
    <property type="type" value="gene"/>
</dbReference>
<dbReference type="neXtProt" id="NX_O43699"/>
<dbReference type="OpenTargets" id="ENSG00000105492"/>
<dbReference type="PharmGKB" id="PA35776"/>
<dbReference type="VEuPathDB" id="HostDB:ENSG00000105492"/>
<dbReference type="eggNOG" id="ENOG502S41V">
    <property type="taxonomic scope" value="Eukaryota"/>
</dbReference>
<dbReference type="GeneTree" id="ENSGT01080000257333"/>
<dbReference type="HOGENOM" id="CLU_024444_6_1_1"/>
<dbReference type="InParanoid" id="O43699"/>
<dbReference type="OMA" id="CNIAQKK"/>
<dbReference type="OrthoDB" id="10012075at2759"/>
<dbReference type="PAN-GO" id="O43699">
    <property type="GO annotations" value="3 GO annotations based on evolutionary models"/>
</dbReference>
<dbReference type="PhylomeDB" id="O43699"/>
<dbReference type="TreeFam" id="TF332441"/>
<dbReference type="PathwayCommons" id="O43699"/>
<dbReference type="Reactome" id="R-HSA-198933">
    <property type="pathway name" value="Immunoregulatory interactions between a Lymphoid and a non-Lymphoid cell"/>
</dbReference>
<dbReference type="SignaLink" id="O43699"/>
<dbReference type="BioGRID-ORCS" id="946">
    <property type="hits" value="30 hits in 1150 CRISPR screens"/>
</dbReference>
<dbReference type="ChiTaRS" id="SIGLEC6">
    <property type="organism name" value="human"/>
</dbReference>
<dbReference type="GenomeRNAi" id="946"/>
<dbReference type="Pharos" id="O43699">
    <property type="development level" value="Tbio"/>
</dbReference>
<dbReference type="PRO" id="PR:O43699"/>
<dbReference type="Proteomes" id="UP000005640">
    <property type="component" value="Chromosome 19"/>
</dbReference>
<dbReference type="RNAct" id="O43699">
    <property type="molecule type" value="protein"/>
</dbReference>
<dbReference type="Bgee" id="ENSG00000105492">
    <property type="expression patterns" value="Expressed in buccal mucosa cell and 95 other cell types or tissues"/>
</dbReference>
<dbReference type="ExpressionAtlas" id="O43699">
    <property type="expression patterns" value="baseline and differential"/>
</dbReference>
<dbReference type="GO" id="GO:0005829">
    <property type="term" value="C:cytosol"/>
    <property type="evidence" value="ECO:0000314"/>
    <property type="project" value="HPA"/>
</dbReference>
<dbReference type="GO" id="GO:0005576">
    <property type="term" value="C:extracellular region"/>
    <property type="evidence" value="ECO:0007669"/>
    <property type="project" value="UniProtKB-SubCell"/>
</dbReference>
<dbReference type="GO" id="GO:0016020">
    <property type="term" value="C:membrane"/>
    <property type="evidence" value="ECO:0000304"/>
    <property type="project" value="ProtInc"/>
</dbReference>
<dbReference type="GO" id="GO:0005886">
    <property type="term" value="C:plasma membrane"/>
    <property type="evidence" value="ECO:0000314"/>
    <property type="project" value="HPA"/>
</dbReference>
<dbReference type="GO" id="GO:0030246">
    <property type="term" value="F:carbohydrate binding"/>
    <property type="evidence" value="ECO:0007669"/>
    <property type="project" value="UniProtKB-KW"/>
</dbReference>
<dbReference type="GO" id="GO:0033691">
    <property type="term" value="F:sialic acid binding"/>
    <property type="evidence" value="ECO:0000318"/>
    <property type="project" value="GO_Central"/>
</dbReference>
<dbReference type="GO" id="GO:0007155">
    <property type="term" value="P:cell adhesion"/>
    <property type="evidence" value="ECO:0000318"/>
    <property type="project" value="GO_Central"/>
</dbReference>
<dbReference type="GO" id="GO:0007267">
    <property type="term" value="P:cell-cell signaling"/>
    <property type="evidence" value="ECO:0000304"/>
    <property type="project" value="ProtInc"/>
</dbReference>
<dbReference type="CDD" id="cd20987">
    <property type="entry name" value="IgC2_CD33_d2_like"/>
    <property type="match status" value="1"/>
</dbReference>
<dbReference type="FunFam" id="2.60.40.10:FF:000912">
    <property type="entry name" value="Myeloid cell surface antigen CD33"/>
    <property type="match status" value="1"/>
</dbReference>
<dbReference type="FunFam" id="2.60.40.10:FF:001967">
    <property type="entry name" value="Sialic acid binding Ig like lectin 6"/>
    <property type="match status" value="1"/>
</dbReference>
<dbReference type="FunFam" id="2.60.40.10:FF:001240">
    <property type="entry name" value="Sialic acid binding Ig-like lectin E"/>
    <property type="match status" value="1"/>
</dbReference>
<dbReference type="Gene3D" id="2.60.40.10">
    <property type="entry name" value="Immunoglobulins"/>
    <property type="match status" value="3"/>
</dbReference>
<dbReference type="InterPro" id="IPR007110">
    <property type="entry name" value="Ig-like_dom"/>
</dbReference>
<dbReference type="InterPro" id="IPR036179">
    <property type="entry name" value="Ig-like_dom_sf"/>
</dbReference>
<dbReference type="InterPro" id="IPR013783">
    <property type="entry name" value="Ig-like_fold"/>
</dbReference>
<dbReference type="InterPro" id="IPR003006">
    <property type="entry name" value="Ig/MHC_CS"/>
</dbReference>
<dbReference type="InterPro" id="IPR013098">
    <property type="entry name" value="Ig_I-set"/>
</dbReference>
<dbReference type="InterPro" id="IPR003599">
    <property type="entry name" value="Ig_sub"/>
</dbReference>
<dbReference type="InterPro" id="IPR003598">
    <property type="entry name" value="Ig_sub2"/>
</dbReference>
<dbReference type="InterPro" id="IPR013106">
    <property type="entry name" value="Ig_V-set"/>
</dbReference>
<dbReference type="InterPro" id="IPR013151">
    <property type="entry name" value="Immunoglobulin_dom"/>
</dbReference>
<dbReference type="InterPro" id="IPR051036">
    <property type="entry name" value="SIGLEC"/>
</dbReference>
<dbReference type="PANTHER" id="PTHR12035">
    <property type="entry name" value="SIALIC ACID BINDING IMMUNOGLOBULIN-LIKE LECTIN"/>
    <property type="match status" value="1"/>
</dbReference>
<dbReference type="PANTHER" id="PTHR12035:SF129">
    <property type="entry name" value="SIALIC ACID-BINDING IG-LIKE LECTIN 6"/>
    <property type="match status" value="1"/>
</dbReference>
<dbReference type="Pfam" id="PF07679">
    <property type="entry name" value="I-set"/>
    <property type="match status" value="1"/>
</dbReference>
<dbReference type="Pfam" id="PF00047">
    <property type="entry name" value="ig"/>
    <property type="match status" value="1"/>
</dbReference>
<dbReference type="Pfam" id="PF07686">
    <property type="entry name" value="V-set"/>
    <property type="match status" value="1"/>
</dbReference>
<dbReference type="SMART" id="SM00409">
    <property type="entry name" value="IG"/>
    <property type="match status" value="3"/>
</dbReference>
<dbReference type="SMART" id="SM00408">
    <property type="entry name" value="IGc2"/>
    <property type="match status" value="1"/>
</dbReference>
<dbReference type="SUPFAM" id="SSF48726">
    <property type="entry name" value="Immunoglobulin"/>
    <property type="match status" value="3"/>
</dbReference>
<dbReference type="PROSITE" id="PS50835">
    <property type="entry name" value="IG_LIKE"/>
    <property type="match status" value="2"/>
</dbReference>
<dbReference type="PROSITE" id="PS00290">
    <property type="entry name" value="IG_MHC"/>
    <property type="match status" value="1"/>
</dbReference>
<feature type="signal peptide" evidence="2">
    <location>
        <begin position="1"/>
        <end position="26"/>
    </location>
</feature>
<feature type="chain" id="PRO_0000014946" description="Sialic acid-binding Ig-like lectin 6">
    <location>
        <begin position="27"/>
        <end position="453"/>
    </location>
</feature>
<feature type="topological domain" description="Extracellular" evidence="2">
    <location>
        <begin position="27"/>
        <end position="347"/>
    </location>
</feature>
<feature type="transmembrane region" description="Helical" evidence="2">
    <location>
        <begin position="348"/>
        <end position="368"/>
    </location>
</feature>
<feature type="topological domain" description="Cytoplasmic" evidence="2">
    <location>
        <begin position="369"/>
        <end position="453"/>
    </location>
</feature>
<feature type="domain" description="Ig-like V-type">
    <location>
        <begin position="28"/>
        <end position="123"/>
    </location>
</feature>
<feature type="domain" description="Ig-like C2-type 1">
    <location>
        <begin position="148"/>
        <end position="231"/>
    </location>
</feature>
<feature type="domain" description="Ig-like C2-type 2">
    <location>
        <begin position="238"/>
        <end position="333"/>
    </location>
</feature>
<feature type="short sequence motif" description="ITIM motif">
    <location>
        <begin position="424"/>
        <end position="429"/>
    </location>
</feature>
<feature type="short sequence motif" description="SLAM-like motif">
    <location>
        <begin position="444"/>
        <end position="449"/>
    </location>
</feature>
<feature type="binding site" evidence="1">
    <location>
        <position position="122"/>
    </location>
    <ligand>
        <name>N-acetylneuraminate</name>
        <dbReference type="ChEBI" id="CHEBI:35418"/>
    </ligand>
</feature>
<feature type="glycosylation site" description="N-linked (GlcNAc...) asparagine" evidence="2">
    <location>
        <position position="103"/>
    </location>
</feature>
<feature type="glycosylation site" description="N-linked (GlcNAc...) asparagine" evidence="2">
    <location>
        <position position="149"/>
    </location>
</feature>
<feature type="glycosylation site" description="N-linked (GlcNAc...) asparagine" evidence="2">
    <location>
        <position position="163"/>
    </location>
</feature>
<feature type="glycosylation site" description="N-linked (GlcNAc...) asparagine" evidence="2">
    <location>
        <position position="233"/>
    </location>
</feature>
<feature type="disulfide bond" evidence="3">
    <location>
        <begin position="46"/>
        <end position="172"/>
    </location>
</feature>
<feature type="disulfide bond" evidence="3">
    <location>
        <begin position="51"/>
        <end position="104"/>
    </location>
</feature>
<feature type="disulfide bond" evidence="3">
    <location>
        <begin position="166"/>
        <end position="215"/>
    </location>
</feature>
<feature type="disulfide bond" evidence="3">
    <location>
        <begin position="274"/>
        <end position="319"/>
    </location>
</feature>
<feature type="splice variant" id="VSP_046070" description="In isoform 6." evidence="6">
    <location>
        <begin position="23"/>
        <end position="58"/>
    </location>
</feature>
<feature type="splice variant" id="VSP_035811" description="In isoform 4." evidence="7">
    <location>
        <begin position="143"/>
        <end position="153"/>
    </location>
</feature>
<feature type="splice variant" id="VSP_035812" description="In isoform 3 and isoform 6." evidence="6 7">
    <original>YAPQKVAISIFQGNSAA</original>
    <variation>S</variation>
    <location>
        <begin position="236"/>
        <end position="252"/>
    </location>
</feature>
<feature type="splice variant" id="VSP_045387" description="In isoform 5." evidence="6">
    <original>Y</original>
    <variation>WMLRRPPLSTPD</variation>
    <location>
        <position position="236"/>
    </location>
</feature>
<feature type="splice variant" id="VSP_002553" description="In isoform 2 and isoform 4." evidence="7 8">
    <original>KPEGRAGGVLGAVWGASITTLVFLCVCFIFRVKTRRKKAAQPVQNTDDVNPVM</original>
    <variation>SSAPVPDRHSFRPPC</variation>
    <location>
        <begin position="339"/>
        <end position="391"/>
    </location>
</feature>
<feature type="splice variant" id="VSP_045388" description="In isoform 5." evidence="6">
    <original>KTRRKKAAQPVQNTDDVNPVMVSGSRGHQHQFQTGIVSDHPAEAGPISEDEQELHYAVLHFHKVQPQEPKVTDTEYSEIKIHK</original>
    <variation>ISTSSRQA</variation>
    <location>
        <begin position="371"/>
        <end position="453"/>
    </location>
</feature>
<feature type="splice variant" id="VSP_002554" description="In isoform 2 and isoform 4." evidence="7 8">
    <location>
        <begin position="392"/>
        <end position="453"/>
    </location>
</feature>
<feature type="sequence variant" id="VAR_014252" description="In dbSNP:rs2305773." evidence="5">
    <original>L</original>
    <variation>V</variation>
    <location>
        <position position="57"/>
    </location>
</feature>
<feature type="sequence variant" id="VAR_014253" description="In dbSNP:rs2005199.">
    <original>L</original>
    <variation>F</variation>
    <location>
        <position position="262"/>
    </location>
</feature>
<feature type="sequence conflict" description="In Ref. 1; BAA24983/BAA24984." evidence="9" ref="1">
    <original>E</original>
    <variation>K</variation>
    <location>
        <position position="6"/>
    </location>
</feature>
<feature type="sequence conflict" description="In Ref. 5; AAB70702." evidence="9" ref="5">
    <original>LS</original>
    <variation>IY</variation>
    <location>
        <begin position="137"/>
        <end position="138"/>
    </location>
</feature>
<feature type="sequence conflict" description="In Ref. 5; AAB70702." evidence="9" ref="5">
    <original>TLESGHP</original>
    <variation>PGVWPS</variation>
    <location>
        <begin position="155"/>
        <end position="161"/>
    </location>
</feature>
<feature type="sequence conflict" description="In Ref. 2; AK300170." evidence="9" ref="2">
    <original>M</original>
    <variation>T</variation>
    <location>
        <position position="183"/>
    </location>
</feature>
<feature type="sequence conflict" description="In Ref. 5; AAB70702." evidence="9" ref="5">
    <original>TS</original>
    <variation>HL</variation>
    <location>
        <begin position="188"/>
        <end position="189"/>
    </location>
</feature>
<feature type="sequence conflict" description="In Ref. 5; AAB70702." evidence="9" ref="5">
    <original>RP</original>
    <variation>A</variation>
    <location>
        <begin position="205"/>
        <end position="206"/>
    </location>
</feature>
<feature type="sequence conflict" description="In Ref. 2; AK300170." evidence="9" ref="2">
    <original>P</original>
    <variation>L</variation>
    <location>
        <position position="389"/>
    </location>
</feature>
<feature type="sequence conflict" description="In Ref. 5; AK300182." evidence="9" ref="5">
    <original>P</original>
    <variation>S</variation>
    <location sequence="O43699-5">
        <position position="246"/>
    </location>
</feature>
<sequence>MQGAQEASASEMLPLLLPLLWAGALAQERRFQLEGPESLTVQEGLCVLVPCRLPTTLPASYYGYGYWFLEGADVPVATNDPDEEVQEETRGRFHLLWDPRRKNCSLSIRDARRRDNAAYFFRLKSKWMKYGYTSSKLSVRVMALTHRPNISIPGTLESGHPSNLTCSVPWVCEQGTPPIFSWMSAAPTSLGPRTTQSSVLTITPRPQDHSTNLTCQVTFPGAGVTMERTIQLNVSYAPQKVAISIFQGNSAAFKILQNTSSLPVLEGQALRLLCDADGNPPAHLSWFQGFPALNATPISNTGVLELPQVGSAEEGDFTCRAQHPLGSLQISLSLFVHWKPEGRAGGVLGAVWGASITTLVFLCVCFIFRVKTRRKKAAQPVQNTDDVNPVMVSGSRGHQHQFQTGIVSDHPAEAGPISEDEQELHYAVLHFHKVQPQEPKVTDTEYSEIKIHK</sequence>
<gene>
    <name type="primary">SIGLEC6</name>
    <name type="synonym">CD33L</name>
    <name type="synonym">CD33L1</name>
    <name type="synonym">OBBP1</name>
</gene>